<comment type="function">
    <text evidence="1">Binds directly to 16S ribosomal RNA.</text>
</comment>
<comment type="similarity">
    <text evidence="1">Belongs to the bacterial ribosomal protein bS20 family.</text>
</comment>
<dbReference type="EMBL" id="CP000255">
    <property type="protein sequence ID" value="ABD20759.1"/>
    <property type="molecule type" value="Genomic_DNA"/>
</dbReference>
<dbReference type="RefSeq" id="WP_001274017.1">
    <property type="nucleotide sequence ID" value="NZ_CP027476.1"/>
</dbReference>
<dbReference type="SMR" id="Q2FGD8"/>
<dbReference type="GeneID" id="66839775"/>
<dbReference type="KEGG" id="saa:SAUSA300_1545"/>
<dbReference type="HOGENOM" id="CLU_160655_1_1_9"/>
<dbReference type="OMA" id="GVIHKNA"/>
<dbReference type="Proteomes" id="UP000001939">
    <property type="component" value="Chromosome"/>
</dbReference>
<dbReference type="GO" id="GO:0005829">
    <property type="term" value="C:cytosol"/>
    <property type="evidence" value="ECO:0007669"/>
    <property type="project" value="TreeGrafter"/>
</dbReference>
<dbReference type="GO" id="GO:0015935">
    <property type="term" value="C:small ribosomal subunit"/>
    <property type="evidence" value="ECO:0007669"/>
    <property type="project" value="TreeGrafter"/>
</dbReference>
<dbReference type="GO" id="GO:0070181">
    <property type="term" value="F:small ribosomal subunit rRNA binding"/>
    <property type="evidence" value="ECO:0007669"/>
    <property type="project" value="TreeGrafter"/>
</dbReference>
<dbReference type="GO" id="GO:0003735">
    <property type="term" value="F:structural constituent of ribosome"/>
    <property type="evidence" value="ECO:0007669"/>
    <property type="project" value="InterPro"/>
</dbReference>
<dbReference type="GO" id="GO:0006412">
    <property type="term" value="P:translation"/>
    <property type="evidence" value="ECO:0007669"/>
    <property type="project" value="UniProtKB-UniRule"/>
</dbReference>
<dbReference type="Gene3D" id="1.20.58.110">
    <property type="entry name" value="Ribosomal protein S20"/>
    <property type="match status" value="1"/>
</dbReference>
<dbReference type="HAMAP" id="MF_00500">
    <property type="entry name" value="Ribosomal_bS20"/>
    <property type="match status" value="1"/>
</dbReference>
<dbReference type="InterPro" id="IPR002583">
    <property type="entry name" value="Ribosomal_bS20"/>
</dbReference>
<dbReference type="InterPro" id="IPR036510">
    <property type="entry name" value="Ribosomal_bS20_sf"/>
</dbReference>
<dbReference type="NCBIfam" id="TIGR00029">
    <property type="entry name" value="S20"/>
    <property type="match status" value="1"/>
</dbReference>
<dbReference type="PANTHER" id="PTHR33398">
    <property type="entry name" value="30S RIBOSOMAL PROTEIN S20"/>
    <property type="match status" value="1"/>
</dbReference>
<dbReference type="PANTHER" id="PTHR33398:SF1">
    <property type="entry name" value="SMALL RIBOSOMAL SUBUNIT PROTEIN BS20C"/>
    <property type="match status" value="1"/>
</dbReference>
<dbReference type="Pfam" id="PF01649">
    <property type="entry name" value="Ribosomal_S20p"/>
    <property type="match status" value="1"/>
</dbReference>
<dbReference type="SUPFAM" id="SSF46992">
    <property type="entry name" value="Ribosomal protein S20"/>
    <property type="match status" value="1"/>
</dbReference>
<feature type="chain" id="PRO_0000236453" description="Small ribosomal subunit protein bS20">
    <location>
        <begin position="1"/>
        <end position="83"/>
    </location>
</feature>
<gene>
    <name evidence="1" type="primary">rpsT</name>
    <name type="ordered locus">SAUSA300_1545</name>
</gene>
<protein>
    <recommendedName>
        <fullName evidence="1">Small ribosomal subunit protein bS20</fullName>
    </recommendedName>
    <alternativeName>
        <fullName evidence="2">30S ribosomal protein S20</fullName>
    </alternativeName>
</protein>
<reference key="1">
    <citation type="journal article" date="2006" name="Lancet">
        <title>Complete genome sequence of USA300, an epidemic clone of community-acquired meticillin-resistant Staphylococcus aureus.</title>
        <authorList>
            <person name="Diep B.A."/>
            <person name="Gill S.R."/>
            <person name="Chang R.F."/>
            <person name="Phan T.H."/>
            <person name="Chen J.H."/>
            <person name="Davidson M.G."/>
            <person name="Lin F."/>
            <person name="Lin J."/>
            <person name="Carleton H.A."/>
            <person name="Mongodin E.F."/>
            <person name="Sensabaugh G.F."/>
            <person name="Perdreau-Remington F."/>
        </authorList>
    </citation>
    <scope>NUCLEOTIDE SEQUENCE [LARGE SCALE GENOMIC DNA]</scope>
    <source>
        <strain>USA300</strain>
    </source>
</reference>
<keyword id="KW-0687">Ribonucleoprotein</keyword>
<keyword id="KW-0689">Ribosomal protein</keyword>
<keyword id="KW-0694">RNA-binding</keyword>
<keyword id="KW-0699">rRNA-binding</keyword>
<accession>Q2FGD8</accession>
<organism>
    <name type="scientific">Staphylococcus aureus (strain USA300)</name>
    <dbReference type="NCBI Taxonomy" id="367830"/>
    <lineage>
        <taxon>Bacteria</taxon>
        <taxon>Bacillati</taxon>
        <taxon>Bacillota</taxon>
        <taxon>Bacilli</taxon>
        <taxon>Bacillales</taxon>
        <taxon>Staphylococcaceae</taxon>
        <taxon>Staphylococcus</taxon>
    </lineage>
</organism>
<sequence>MANIKSAIKRVKTTEKAEARNISQKSAMRTAVKNAKTAVSNNADNKNELVSLAVKLVDKAAQSNLIHSNKADRIKSQLMTANK</sequence>
<proteinExistence type="inferred from homology"/>
<evidence type="ECO:0000255" key="1">
    <source>
        <dbReference type="HAMAP-Rule" id="MF_00500"/>
    </source>
</evidence>
<evidence type="ECO:0000305" key="2"/>
<name>RS20_STAA3</name>